<dbReference type="EMBL" id="BC105171">
    <property type="protein sequence ID" value="AAI05172.1"/>
    <property type="molecule type" value="mRNA"/>
</dbReference>
<dbReference type="RefSeq" id="NP_001030457.1">
    <property type="nucleotide sequence ID" value="NM_001035380.2"/>
</dbReference>
<dbReference type="SMR" id="Q3MHN5"/>
<dbReference type="FunCoup" id="Q3MHN5">
    <property type="interactions" value="315"/>
</dbReference>
<dbReference type="STRING" id="9913.ENSBTAP00000062210"/>
<dbReference type="GlyCosmos" id="Q3MHN5">
    <property type="glycosylation" value="2 sites, No reported glycans"/>
</dbReference>
<dbReference type="GlyGen" id="Q3MHN5">
    <property type="glycosylation" value="2 sites"/>
</dbReference>
<dbReference type="PaxDb" id="9913-ENSBTAP00000033386"/>
<dbReference type="PeptideAtlas" id="Q3MHN5"/>
<dbReference type="GeneID" id="530076"/>
<dbReference type="KEGG" id="bta:530076"/>
<dbReference type="CTD" id="2638"/>
<dbReference type="eggNOG" id="ENOG502QTPW">
    <property type="taxonomic scope" value="Eukaryota"/>
</dbReference>
<dbReference type="InParanoid" id="Q3MHN5"/>
<dbReference type="OrthoDB" id="9874779at2759"/>
<dbReference type="Proteomes" id="UP000009136">
    <property type="component" value="Unplaced"/>
</dbReference>
<dbReference type="GO" id="GO:0005737">
    <property type="term" value="C:cytoplasm"/>
    <property type="evidence" value="ECO:0000318"/>
    <property type="project" value="GO_Central"/>
</dbReference>
<dbReference type="GO" id="GO:0005615">
    <property type="term" value="C:extracellular space"/>
    <property type="evidence" value="ECO:0007669"/>
    <property type="project" value="InterPro"/>
</dbReference>
<dbReference type="GO" id="GO:0003779">
    <property type="term" value="F:actin binding"/>
    <property type="evidence" value="ECO:0007669"/>
    <property type="project" value="UniProtKB-KW"/>
</dbReference>
<dbReference type="GO" id="GO:0005499">
    <property type="term" value="F:vitamin D binding"/>
    <property type="evidence" value="ECO:0000318"/>
    <property type="project" value="GO_Central"/>
</dbReference>
<dbReference type="GO" id="GO:0090482">
    <property type="term" value="F:vitamin transmembrane transporter activity"/>
    <property type="evidence" value="ECO:0007669"/>
    <property type="project" value="InterPro"/>
</dbReference>
<dbReference type="GO" id="GO:0042359">
    <property type="term" value="P:vitamin D metabolic process"/>
    <property type="evidence" value="ECO:0000318"/>
    <property type="project" value="GO_Central"/>
</dbReference>
<dbReference type="CDD" id="cd00015">
    <property type="entry name" value="ALBUMIN"/>
    <property type="match status" value="1"/>
</dbReference>
<dbReference type="Gene3D" id="1.10.246.10">
    <property type="match status" value="5"/>
</dbReference>
<dbReference type="InterPro" id="IPR000264">
    <property type="entry name" value="ALB/AFP/VDB"/>
</dbReference>
<dbReference type="InterPro" id="IPR020858">
    <property type="entry name" value="Serum_albumin-like"/>
</dbReference>
<dbReference type="InterPro" id="IPR020857">
    <property type="entry name" value="Serum_albumin_CS"/>
</dbReference>
<dbReference type="InterPro" id="IPR014760">
    <property type="entry name" value="Serum_albumin_N"/>
</dbReference>
<dbReference type="InterPro" id="IPR000213">
    <property type="entry name" value="VitD-bd"/>
</dbReference>
<dbReference type="InterPro" id="IPR015247">
    <property type="entry name" value="VitD-bind_III"/>
</dbReference>
<dbReference type="PANTHER" id="PTHR11385">
    <property type="entry name" value="SERUM ALBUMIN-RELATED"/>
    <property type="match status" value="1"/>
</dbReference>
<dbReference type="PANTHER" id="PTHR11385:SF11">
    <property type="entry name" value="VITAMIN D-BINDING PROTEIN"/>
    <property type="match status" value="1"/>
</dbReference>
<dbReference type="Pfam" id="PF00273">
    <property type="entry name" value="Serum_albumin"/>
    <property type="match status" value="2"/>
</dbReference>
<dbReference type="Pfam" id="PF09164">
    <property type="entry name" value="VitD-bind_III"/>
    <property type="match status" value="1"/>
</dbReference>
<dbReference type="PRINTS" id="PR00802">
    <property type="entry name" value="SERUMALBUMIN"/>
</dbReference>
<dbReference type="PRINTS" id="PR00804">
    <property type="entry name" value="VITAMNDBNDNG"/>
</dbReference>
<dbReference type="SMART" id="SM00103">
    <property type="entry name" value="ALBUMIN"/>
    <property type="match status" value="2"/>
</dbReference>
<dbReference type="SUPFAM" id="SSF48552">
    <property type="entry name" value="Serum albumin-like"/>
    <property type="match status" value="3"/>
</dbReference>
<dbReference type="PROSITE" id="PS00212">
    <property type="entry name" value="ALBUMIN_1"/>
    <property type="match status" value="1"/>
</dbReference>
<dbReference type="PROSITE" id="PS51438">
    <property type="entry name" value="ALBUMIN_2"/>
    <property type="match status" value="2"/>
</dbReference>
<sequence length="474" mass="53342">MKRILVFLLAVAFVHALERGRDYEKDKVCKDLASLGREDFTSLSMVLYSRKFPSGTFEQISHLVNEVVSLTVTCCAEGADPDCYDNRTSALSDKSCESNSPFPVHPGTPECCTHEGLEKKLCMAALKHQPQEFPTYVEPTNDEICEAFRKDPKDFADRFMYEYSINYGQAPLTLLVGYTKSYLSMVGSCCTSPNPTVCFLKERLQLKHFSLLTIMTNRICSQYAAYGKEKSRLSHLIKFAQKVPTAHLEDVLPLAEDITTILSKCCDSVSEDCIKELPEYAVKLCDNLSTKNSKFKDCCQEKTPMEIFVCAYFMPASPNPELPDVKLPMNKDVCDEGNTKVLDQYIFELSRKTQIPEVFLTKILESTLKSLDECCHSESSTACLNAKGPQLTRELSSFIQKGQELCADYSENTFTEYKKKLAERLRGKFPDATETDLQELVAKRSDFASKCCSVNSPPLYCNSEIDAEINTLQS</sequence>
<comment type="function">
    <text evidence="1">Involved in vitamin D transport and storage, scavenging of extracellular G-actin, enhancement of the chemotactic activity of C5 alpha for neutrophils in inflammation and macrophage activation.</text>
</comment>
<comment type="subunit">
    <text evidence="1 2">Associates with membrane-bound immunoglobulin on the surface of B-lymphocytes and with IgG Fc receptor on the membranes of T-lymphocytes. Interacts with LRP2; the interaction is required for renal uptake of GC in complex with 25-hydroxyvitamin D3.</text>
</comment>
<comment type="subcellular location">
    <subcellularLocation>
        <location evidence="2">Secreted</location>
    </subcellularLocation>
</comment>
<comment type="similarity">
    <text evidence="4">Belongs to the ALB/AFP/VDB family.</text>
</comment>
<organism>
    <name type="scientific">Bos taurus</name>
    <name type="common">Bovine</name>
    <dbReference type="NCBI Taxonomy" id="9913"/>
    <lineage>
        <taxon>Eukaryota</taxon>
        <taxon>Metazoa</taxon>
        <taxon>Chordata</taxon>
        <taxon>Craniata</taxon>
        <taxon>Vertebrata</taxon>
        <taxon>Euteleostomi</taxon>
        <taxon>Mammalia</taxon>
        <taxon>Eutheria</taxon>
        <taxon>Laurasiatheria</taxon>
        <taxon>Artiodactyla</taxon>
        <taxon>Ruminantia</taxon>
        <taxon>Pecora</taxon>
        <taxon>Bovidae</taxon>
        <taxon>Bovinae</taxon>
        <taxon>Bos</taxon>
    </lineage>
</organism>
<protein>
    <recommendedName>
        <fullName>Vitamin D-binding protein</fullName>
        <shortName>DBP</shortName>
        <shortName>VDB</shortName>
    </recommendedName>
    <alternativeName>
        <fullName>Gc-globulin</fullName>
    </alternativeName>
    <alternativeName>
        <fullName>Group-specific component</fullName>
    </alternativeName>
</protein>
<feature type="signal peptide" evidence="2">
    <location>
        <begin position="1"/>
        <end position="16"/>
    </location>
</feature>
<feature type="chain" id="PRO_0000045781" description="Vitamin D-binding protein">
    <location>
        <begin position="17"/>
        <end position="474"/>
    </location>
</feature>
<feature type="domain" description="Albumin 1" evidence="4">
    <location>
        <begin position="17"/>
        <end position="208"/>
    </location>
</feature>
<feature type="domain" description="Albumin 2" evidence="4">
    <location>
        <begin position="209"/>
        <end position="393"/>
    </location>
</feature>
<feature type="domain" description="Albumin 3" evidence="4">
    <location>
        <begin position="394"/>
        <end position="474"/>
    </location>
</feature>
<feature type="glycosylation site" description="N-linked (GlcNAc...) asparagine" evidence="3">
    <location>
        <position position="86"/>
    </location>
</feature>
<feature type="glycosylation site" description="N-linked (GlcNAc...) asparagine" evidence="3">
    <location>
        <position position="287"/>
    </location>
</feature>
<feature type="disulfide bond" evidence="4">
    <location>
        <begin position="29"/>
        <end position="75"/>
    </location>
</feature>
<feature type="disulfide bond" evidence="4">
    <location>
        <begin position="74"/>
        <end position="83"/>
    </location>
</feature>
<feature type="disulfide bond" evidence="4">
    <location>
        <begin position="96"/>
        <end position="112"/>
    </location>
</feature>
<feature type="disulfide bond" evidence="4">
    <location>
        <begin position="111"/>
        <end position="122"/>
    </location>
</feature>
<feature type="disulfide bond" evidence="4">
    <location>
        <begin position="145"/>
        <end position="190"/>
    </location>
</feature>
<feature type="disulfide bond" evidence="4">
    <location>
        <begin position="189"/>
        <end position="198"/>
    </location>
</feature>
<feature type="disulfide bond" evidence="4">
    <location>
        <begin position="220"/>
        <end position="266"/>
    </location>
</feature>
<feature type="disulfide bond" evidence="4">
    <location>
        <begin position="265"/>
        <end position="273"/>
    </location>
</feature>
<feature type="disulfide bond" evidence="4">
    <location>
        <begin position="285"/>
        <end position="299"/>
    </location>
</feature>
<feature type="disulfide bond" evidence="4">
    <location>
        <begin position="298"/>
        <end position="310"/>
    </location>
</feature>
<feature type="disulfide bond" evidence="4">
    <location>
        <begin position="334"/>
        <end position="375"/>
    </location>
</feature>
<feature type="disulfide bond" evidence="4">
    <location>
        <begin position="374"/>
        <end position="383"/>
    </location>
</feature>
<feature type="disulfide bond" evidence="4">
    <location>
        <begin position="406"/>
        <end position="452"/>
    </location>
</feature>
<feature type="disulfide bond" evidence="4">
    <location>
        <begin position="451"/>
        <end position="461"/>
    </location>
</feature>
<keyword id="KW-0009">Actin-binding</keyword>
<keyword id="KW-1015">Disulfide bond</keyword>
<keyword id="KW-0325">Glycoprotein</keyword>
<keyword id="KW-1185">Reference proteome</keyword>
<keyword id="KW-0677">Repeat</keyword>
<keyword id="KW-0964">Secreted</keyword>
<keyword id="KW-0732">Signal</keyword>
<keyword id="KW-0813">Transport</keyword>
<keyword id="KW-0848">Vitamin D</keyword>
<evidence type="ECO:0000250" key="1">
    <source>
        <dbReference type="UniProtKB" id="P02774"/>
    </source>
</evidence>
<evidence type="ECO:0000250" key="2">
    <source>
        <dbReference type="UniProtKB" id="P21614"/>
    </source>
</evidence>
<evidence type="ECO:0000255" key="3"/>
<evidence type="ECO:0000255" key="4">
    <source>
        <dbReference type="PROSITE-ProRule" id="PRU00769"/>
    </source>
</evidence>
<name>VTDB_BOVIN</name>
<gene>
    <name type="primary">GC</name>
</gene>
<accession>Q3MHN5</accession>
<reference key="1">
    <citation type="submission" date="2005-09" db="EMBL/GenBank/DDBJ databases">
        <authorList>
            <consortium name="NIH - Mammalian Gene Collection (MGC) project"/>
        </authorList>
    </citation>
    <scope>NUCLEOTIDE SEQUENCE [LARGE SCALE MRNA]</scope>
    <source>
        <strain>Crossbred X Angus</strain>
        <tissue>Liver</tissue>
    </source>
</reference>
<proteinExistence type="evidence at transcript level"/>